<sequence length="108" mass="11808">RGENVRPTVSIYCPSLEQRNSGSASTVCLVDKFYPGGAQVTWKGDNKVISSGVDTSDKIKDKDNTYSMSSTLTMSSEEFKYSTMTCEVTHPTLTPALAKSFQTSECTF</sequence>
<proteinExistence type="evidence at protein level"/>
<name>IGKC_AQUCT</name>
<dbReference type="PIR" id="A93135">
    <property type="entry name" value="K3FG"/>
</dbReference>
<dbReference type="SMR" id="P11272"/>
<dbReference type="CDD" id="cd07699">
    <property type="entry name" value="IgC1_L"/>
    <property type="match status" value="1"/>
</dbReference>
<dbReference type="FunFam" id="2.60.40.10:FF:000283">
    <property type="entry name" value="Immunoglobulin kappa constant"/>
    <property type="match status" value="1"/>
</dbReference>
<dbReference type="Gene3D" id="2.60.40.10">
    <property type="entry name" value="Immunoglobulins"/>
    <property type="match status" value="1"/>
</dbReference>
<dbReference type="InterPro" id="IPR007110">
    <property type="entry name" value="Ig-like_dom"/>
</dbReference>
<dbReference type="InterPro" id="IPR036179">
    <property type="entry name" value="Ig-like_dom_sf"/>
</dbReference>
<dbReference type="InterPro" id="IPR013783">
    <property type="entry name" value="Ig-like_fold"/>
</dbReference>
<dbReference type="InterPro" id="IPR003597">
    <property type="entry name" value="Ig_C1-set"/>
</dbReference>
<dbReference type="InterPro" id="IPR050160">
    <property type="entry name" value="MHC/Immunoglobulin"/>
</dbReference>
<dbReference type="PANTHER" id="PTHR19944:SF98">
    <property type="entry name" value="IG-LIKE DOMAIN-CONTAINING PROTEIN"/>
    <property type="match status" value="1"/>
</dbReference>
<dbReference type="PANTHER" id="PTHR19944">
    <property type="entry name" value="MHC CLASS II-RELATED"/>
    <property type="match status" value="1"/>
</dbReference>
<dbReference type="Pfam" id="PF07654">
    <property type="entry name" value="C1-set"/>
    <property type="match status" value="1"/>
</dbReference>
<dbReference type="SMART" id="SM00407">
    <property type="entry name" value="IGc1"/>
    <property type="match status" value="1"/>
</dbReference>
<dbReference type="SUPFAM" id="SSF48726">
    <property type="entry name" value="Immunoglobulin"/>
    <property type="match status" value="1"/>
</dbReference>
<dbReference type="PROSITE" id="PS50835">
    <property type="entry name" value="IG_LIKE"/>
    <property type="match status" value="1"/>
</dbReference>
<feature type="chain" id="PRO_0000153598" description="Ig light chain C region">
    <location>
        <begin position="1" status="less than"/>
        <end position="108"/>
    </location>
</feature>
<feature type="domain" description="Ig-like">
    <location>
        <begin position="7"/>
        <end position="102"/>
    </location>
</feature>
<feature type="disulfide bond">
    <location>
        <begin position="13"/>
        <end position="106"/>
    </location>
</feature>
<feature type="disulfide bond">
    <location>
        <begin position="28"/>
        <end position="86"/>
    </location>
</feature>
<feature type="sequence variant" description="In 50% of the molecules.">
    <original>K</original>
    <variation>R</variation>
    <location>
        <position position="47"/>
    </location>
</feature>
<feature type="non-terminal residue">
    <location>
        <position position="1"/>
    </location>
</feature>
<keyword id="KW-0903">Direct protein sequencing</keyword>
<keyword id="KW-1015">Disulfide bond</keyword>
<keyword id="KW-0393">Immunoglobulin domain</keyword>
<protein>
    <recommendedName>
        <fullName>Ig light chain C region</fullName>
    </recommendedName>
</protein>
<organism>
    <name type="scientific">Aquarana catesbeiana</name>
    <name type="common">American bullfrog</name>
    <name type="synonym">Rana catesbeiana</name>
    <dbReference type="NCBI Taxonomy" id="8400"/>
    <lineage>
        <taxon>Eukaryota</taxon>
        <taxon>Metazoa</taxon>
        <taxon>Chordata</taxon>
        <taxon>Craniata</taxon>
        <taxon>Vertebrata</taxon>
        <taxon>Euteleostomi</taxon>
        <taxon>Amphibia</taxon>
        <taxon>Batrachia</taxon>
        <taxon>Anura</taxon>
        <taxon>Neobatrachia</taxon>
        <taxon>Ranoidea</taxon>
        <taxon>Ranidae</taxon>
        <taxon>Aquarana</taxon>
    </lineage>
</organism>
<reference key="1">
    <citation type="journal article" date="1988" name="Mol. Immunol.">
        <title>Amino acid sequence of the constant region of immunoglobulin light chains from Rana catesbeiana.</title>
        <authorList>
            <person name="Mikoryak C.A."/>
            <person name="Steiner L.A."/>
        </authorList>
    </citation>
    <scope>PROTEIN SEQUENCE</scope>
</reference>
<accession>P11272</accession>